<protein>
    <recommendedName>
        <fullName evidence="1">Pyrimidine/purine nucleoside phosphorylase</fullName>
        <ecNumber evidence="1">2.4.2.1</ecNumber>
        <ecNumber evidence="1">2.4.2.2</ecNumber>
    </recommendedName>
    <alternativeName>
        <fullName evidence="1">Adenosine phosphorylase</fullName>
    </alternativeName>
    <alternativeName>
        <fullName evidence="1">Cytidine phosphorylase</fullName>
    </alternativeName>
    <alternativeName>
        <fullName evidence="1">Guanosine phosphorylase</fullName>
    </alternativeName>
    <alternativeName>
        <fullName evidence="1">Inosine phosphorylase</fullName>
    </alternativeName>
    <alternativeName>
        <fullName evidence="1">Thymidine phosphorylase</fullName>
    </alternativeName>
    <alternativeName>
        <fullName evidence="1">Uridine phosphorylase</fullName>
    </alternativeName>
    <alternativeName>
        <fullName evidence="1">Xanthosine phosphorylase</fullName>
    </alternativeName>
</protein>
<reference key="1">
    <citation type="journal article" date="2007" name="Nat. Biotechnol.">
        <title>Complete genome sequence of the myxobacterium Sorangium cellulosum.</title>
        <authorList>
            <person name="Schneiker S."/>
            <person name="Perlova O."/>
            <person name="Kaiser O."/>
            <person name="Gerth K."/>
            <person name="Alici A."/>
            <person name="Altmeyer M.O."/>
            <person name="Bartels D."/>
            <person name="Bekel T."/>
            <person name="Beyer S."/>
            <person name="Bode E."/>
            <person name="Bode H.B."/>
            <person name="Bolten C.J."/>
            <person name="Choudhuri J.V."/>
            <person name="Doss S."/>
            <person name="Elnakady Y.A."/>
            <person name="Frank B."/>
            <person name="Gaigalat L."/>
            <person name="Goesmann A."/>
            <person name="Groeger C."/>
            <person name="Gross F."/>
            <person name="Jelsbak L."/>
            <person name="Jelsbak L."/>
            <person name="Kalinowski J."/>
            <person name="Kegler C."/>
            <person name="Knauber T."/>
            <person name="Konietzny S."/>
            <person name="Kopp M."/>
            <person name="Krause L."/>
            <person name="Krug D."/>
            <person name="Linke B."/>
            <person name="Mahmud T."/>
            <person name="Martinez-Arias R."/>
            <person name="McHardy A.C."/>
            <person name="Merai M."/>
            <person name="Meyer F."/>
            <person name="Mormann S."/>
            <person name="Munoz-Dorado J."/>
            <person name="Perez J."/>
            <person name="Pradella S."/>
            <person name="Rachid S."/>
            <person name="Raddatz G."/>
            <person name="Rosenau F."/>
            <person name="Rueckert C."/>
            <person name="Sasse F."/>
            <person name="Scharfe M."/>
            <person name="Schuster S.C."/>
            <person name="Suen G."/>
            <person name="Treuner-Lange A."/>
            <person name="Velicer G.J."/>
            <person name="Vorholter F.-J."/>
            <person name="Weissman K.J."/>
            <person name="Welch R.D."/>
            <person name="Wenzel S.C."/>
            <person name="Whitworth D.E."/>
            <person name="Wilhelm S."/>
            <person name="Wittmann C."/>
            <person name="Bloecker H."/>
            <person name="Puehler A."/>
            <person name="Mueller R."/>
        </authorList>
    </citation>
    <scope>NUCLEOTIDE SEQUENCE [LARGE SCALE GENOMIC DNA]</scope>
    <source>
        <strain>So ce56</strain>
    </source>
</reference>
<organism>
    <name type="scientific">Sorangium cellulosum (strain So ce56)</name>
    <name type="common">Polyangium cellulosum (strain So ce56)</name>
    <dbReference type="NCBI Taxonomy" id="448385"/>
    <lineage>
        <taxon>Bacteria</taxon>
        <taxon>Pseudomonadati</taxon>
        <taxon>Myxococcota</taxon>
        <taxon>Polyangia</taxon>
        <taxon>Polyangiales</taxon>
        <taxon>Polyangiaceae</taxon>
        <taxon>Sorangium</taxon>
    </lineage>
</organism>
<dbReference type="EC" id="2.4.2.1" evidence="1"/>
<dbReference type="EC" id="2.4.2.2" evidence="1"/>
<dbReference type="EMBL" id="AM746676">
    <property type="protein sequence ID" value="CAN94993.1"/>
    <property type="molecule type" value="Genomic_DNA"/>
</dbReference>
<dbReference type="RefSeq" id="WP_012237462.1">
    <property type="nucleotide sequence ID" value="NC_010162.1"/>
</dbReference>
<dbReference type="SMR" id="A9FFI1"/>
<dbReference type="STRING" id="448385.sce4830"/>
<dbReference type="KEGG" id="scl:sce4830"/>
<dbReference type="eggNOG" id="COG3123">
    <property type="taxonomic scope" value="Bacteria"/>
</dbReference>
<dbReference type="HOGENOM" id="CLU_157874_0_0_7"/>
<dbReference type="OrthoDB" id="9793848at2"/>
<dbReference type="BioCyc" id="SCEL448385:SCE_RS24795-MONOMER"/>
<dbReference type="Proteomes" id="UP000002139">
    <property type="component" value="Chromosome"/>
</dbReference>
<dbReference type="GO" id="GO:0005829">
    <property type="term" value="C:cytosol"/>
    <property type="evidence" value="ECO:0007669"/>
    <property type="project" value="TreeGrafter"/>
</dbReference>
<dbReference type="GO" id="GO:0047975">
    <property type="term" value="F:guanosine phosphorylase activity"/>
    <property type="evidence" value="ECO:0007669"/>
    <property type="project" value="UniProtKB-EC"/>
</dbReference>
<dbReference type="GO" id="GO:0004731">
    <property type="term" value="F:purine-nucleoside phosphorylase activity"/>
    <property type="evidence" value="ECO:0007669"/>
    <property type="project" value="UniProtKB-UniRule"/>
</dbReference>
<dbReference type="GO" id="GO:0009032">
    <property type="term" value="F:thymidine phosphorylase activity"/>
    <property type="evidence" value="ECO:0007669"/>
    <property type="project" value="UniProtKB-EC"/>
</dbReference>
<dbReference type="GO" id="GO:0004850">
    <property type="term" value="F:uridine phosphorylase activity"/>
    <property type="evidence" value="ECO:0007669"/>
    <property type="project" value="UniProtKB-EC"/>
</dbReference>
<dbReference type="Gene3D" id="2.60.120.10">
    <property type="entry name" value="Jelly Rolls"/>
    <property type="match status" value="1"/>
</dbReference>
<dbReference type="HAMAP" id="MF_01537">
    <property type="entry name" value="Nucleos_phosphorylase_PpnP"/>
    <property type="match status" value="1"/>
</dbReference>
<dbReference type="InterPro" id="IPR009664">
    <property type="entry name" value="Ppnp"/>
</dbReference>
<dbReference type="InterPro" id="IPR014710">
    <property type="entry name" value="RmlC-like_jellyroll"/>
</dbReference>
<dbReference type="InterPro" id="IPR011051">
    <property type="entry name" value="RmlC_Cupin_sf"/>
</dbReference>
<dbReference type="PANTHER" id="PTHR36540">
    <property type="entry name" value="PYRIMIDINE/PURINE NUCLEOSIDE PHOSPHORYLASE"/>
    <property type="match status" value="1"/>
</dbReference>
<dbReference type="PANTHER" id="PTHR36540:SF1">
    <property type="entry name" value="PYRIMIDINE_PURINE NUCLEOSIDE PHOSPHORYLASE"/>
    <property type="match status" value="1"/>
</dbReference>
<dbReference type="Pfam" id="PF06865">
    <property type="entry name" value="Ppnp"/>
    <property type="match status" value="1"/>
</dbReference>
<dbReference type="SUPFAM" id="SSF51182">
    <property type="entry name" value="RmlC-like cupins"/>
    <property type="match status" value="1"/>
</dbReference>
<evidence type="ECO:0000255" key="1">
    <source>
        <dbReference type="HAMAP-Rule" id="MF_01537"/>
    </source>
</evidence>
<sequence length="93" mass="10230">MLKHNSYFNGNVQSVGFERHGRRQTVGVIDTGEFHFSTDAPERMTVVAGELAIRVDGSTEWRAYPAGTSFEVAGKSGFDVRATQPAGYLCEFL</sequence>
<feature type="chain" id="PRO_1000185200" description="Pyrimidine/purine nucleoside phosphorylase">
    <location>
        <begin position="1"/>
        <end position="93"/>
    </location>
</feature>
<gene>
    <name evidence="1" type="primary">ppnP</name>
    <name type="ordered locus">sce4830</name>
</gene>
<name>PPNP_SORC5</name>
<keyword id="KW-0328">Glycosyltransferase</keyword>
<keyword id="KW-1185">Reference proteome</keyword>
<keyword id="KW-0808">Transferase</keyword>
<accession>A9FFI1</accession>
<comment type="function">
    <text evidence="1">Catalyzes the phosphorolysis of diverse nucleosides, yielding D-ribose 1-phosphate and the respective free bases. Can use uridine, adenosine, guanosine, cytidine, thymidine, inosine and xanthosine as substrates. Also catalyzes the reverse reactions.</text>
</comment>
<comment type="catalytic activity">
    <reaction evidence="1">
        <text>a purine D-ribonucleoside + phosphate = a purine nucleobase + alpha-D-ribose 1-phosphate</text>
        <dbReference type="Rhea" id="RHEA:19805"/>
        <dbReference type="ChEBI" id="CHEBI:26386"/>
        <dbReference type="ChEBI" id="CHEBI:43474"/>
        <dbReference type="ChEBI" id="CHEBI:57720"/>
        <dbReference type="ChEBI" id="CHEBI:142355"/>
        <dbReference type="EC" id="2.4.2.1"/>
    </reaction>
</comment>
<comment type="catalytic activity">
    <reaction evidence="1">
        <text>adenosine + phosphate = alpha-D-ribose 1-phosphate + adenine</text>
        <dbReference type="Rhea" id="RHEA:27642"/>
        <dbReference type="ChEBI" id="CHEBI:16335"/>
        <dbReference type="ChEBI" id="CHEBI:16708"/>
        <dbReference type="ChEBI" id="CHEBI:43474"/>
        <dbReference type="ChEBI" id="CHEBI:57720"/>
        <dbReference type="EC" id="2.4.2.1"/>
    </reaction>
</comment>
<comment type="catalytic activity">
    <reaction evidence="1">
        <text>cytidine + phosphate = cytosine + alpha-D-ribose 1-phosphate</text>
        <dbReference type="Rhea" id="RHEA:52540"/>
        <dbReference type="ChEBI" id="CHEBI:16040"/>
        <dbReference type="ChEBI" id="CHEBI:17562"/>
        <dbReference type="ChEBI" id="CHEBI:43474"/>
        <dbReference type="ChEBI" id="CHEBI:57720"/>
        <dbReference type="EC" id="2.4.2.2"/>
    </reaction>
</comment>
<comment type="catalytic activity">
    <reaction evidence="1">
        <text>guanosine + phosphate = alpha-D-ribose 1-phosphate + guanine</text>
        <dbReference type="Rhea" id="RHEA:13233"/>
        <dbReference type="ChEBI" id="CHEBI:16235"/>
        <dbReference type="ChEBI" id="CHEBI:16750"/>
        <dbReference type="ChEBI" id="CHEBI:43474"/>
        <dbReference type="ChEBI" id="CHEBI:57720"/>
        <dbReference type="EC" id="2.4.2.1"/>
    </reaction>
</comment>
<comment type="catalytic activity">
    <reaction evidence="1">
        <text>inosine + phosphate = alpha-D-ribose 1-phosphate + hypoxanthine</text>
        <dbReference type="Rhea" id="RHEA:27646"/>
        <dbReference type="ChEBI" id="CHEBI:17368"/>
        <dbReference type="ChEBI" id="CHEBI:17596"/>
        <dbReference type="ChEBI" id="CHEBI:43474"/>
        <dbReference type="ChEBI" id="CHEBI:57720"/>
        <dbReference type="EC" id="2.4.2.1"/>
    </reaction>
</comment>
<comment type="catalytic activity">
    <reaction evidence="1">
        <text>thymidine + phosphate = 2-deoxy-alpha-D-ribose 1-phosphate + thymine</text>
        <dbReference type="Rhea" id="RHEA:16037"/>
        <dbReference type="ChEBI" id="CHEBI:17748"/>
        <dbReference type="ChEBI" id="CHEBI:17821"/>
        <dbReference type="ChEBI" id="CHEBI:43474"/>
        <dbReference type="ChEBI" id="CHEBI:57259"/>
        <dbReference type="EC" id="2.4.2.2"/>
    </reaction>
</comment>
<comment type="catalytic activity">
    <reaction evidence="1">
        <text>uridine + phosphate = alpha-D-ribose 1-phosphate + uracil</text>
        <dbReference type="Rhea" id="RHEA:24388"/>
        <dbReference type="ChEBI" id="CHEBI:16704"/>
        <dbReference type="ChEBI" id="CHEBI:17568"/>
        <dbReference type="ChEBI" id="CHEBI:43474"/>
        <dbReference type="ChEBI" id="CHEBI:57720"/>
        <dbReference type="EC" id="2.4.2.2"/>
    </reaction>
</comment>
<comment type="catalytic activity">
    <reaction evidence="1">
        <text>xanthosine + phosphate = alpha-D-ribose 1-phosphate + xanthine</text>
        <dbReference type="Rhea" id="RHEA:27638"/>
        <dbReference type="ChEBI" id="CHEBI:17712"/>
        <dbReference type="ChEBI" id="CHEBI:18107"/>
        <dbReference type="ChEBI" id="CHEBI:43474"/>
        <dbReference type="ChEBI" id="CHEBI:57720"/>
        <dbReference type="EC" id="2.4.2.1"/>
    </reaction>
</comment>
<comment type="similarity">
    <text evidence="1">Belongs to the nucleoside phosphorylase PpnP family.</text>
</comment>
<proteinExistence type="inferred from homology"/>